<reference key="1">
    <citation type="journal article" date="2014" name="Genome Announc.">
        <title>Complete Genome Sequence of the Extreme Thermophile Dictyoglomus thermophilum H-6-12.</title>
        <authorList>
            <person name="Coil D.A."/>
            <person name="Badger J.H."/>
            <person name="Forberger H.C."/>
            <person name="Riggs F."/>
            <person name="Madupu R."/>
            <person name="Fedorova N."/>
            <person name="Ward N."/>
            <person name="Robb F.T."/>
            <person name="Eisen J.A."/>
        </authorList>
    </citation>
    <scope>NUCLEOTIDE SEQUENCE [LARGE SCALE GENOMIC DNA]</scope>
    <source>
        <strain>ATCC 35947 / DSM 3960 / H-6-12</strain>
    </source>
</reference>
<proteinExistence type="inferred from homology"/>
<dbReference type="EC" id="6.1.1.20" evidence="1"/>
<dbReference type="EMBL" id="CP001146">
    <property type="protein sequence ID" value="ACI18866.1"/>
    <property type="molecule type" value="Genomic_DNA"/>
</dbReference>
<dbReference type="RefSeq" id="WP_012547498.1">
    <property type="nucleotide sequence ID" value="NC_011297.1"/>
</dbReference>
<dbReference type="SMR" id="B5YER5"/>
<dbReference type="STRING" id="309799.DICTH_1194"/>
<dbReference type="PaxDb" id="309799-DICTH_1194"/>
<dbReference type="KEGG" id="dth:DICTH_1194"/>
<dbReference type="eggNOG" id="COG0016">
    <property type="taxonomic scope" value="Bacteria"/>
</dbReference>
<dbReference type="HOGENOM" id="CLU_025086_0_1_0"/>
<dbReference type="OrthoDB" id="9800719at2"/>
<dbReference type="Proteomes" id="UP000001733">
    <property type="component" value="Chromosome"/>
</dbReference>
<dbReference type="GO" id="GO:0005737">
    <property type="term" value="C:cytoplasm"/>
    <property type="evidence" value="ECO:0007669"/>
    <property type="project" value="UniProtKB-SubCell"/>
</dbReference>
<dbReference type="GO" id="GO:0005524">
    <property type="term" value="F:ATP binding"/>
    <property type="evidence" value="ECO:0007669"/>
    <property type="project" value="UniProtKB-UniRule"/>
</dbReference>
<dbReference type="GO" id="GO:0000287">
    <property type="term" value="F:magnesium ion binding"/>
    <property type="evidence" value="ECO:0007669"/>
    <property type="project" value="UniProtKB-UniRule"/>
</dbReference>
<dbReference type="GO" id="GO:0004826">
    <property type="term" value="F:phenylalanine-tRNA ligase activity"/>
    <property type="evidence" value="ECO:0007669"/>
    <property type="project" value="UniProtKB-UniRule"/>
</dbReference>
<dbReference type="GO" id="GO:0000049">
    <property type="term" value="F:tRNA binding"/>
    <property type="evidence" value="ECO:0007669"/>
    <property type="project" value="InterPro"/>
</dbReference>
<dbReference type="GO" id="GO:0006432">
    <property type="term" value="P:phenylalanyl-tRNA aminoacylation"/>
    <property type="evidence" value="ECO:0007669"/>
    <property type="project" value="UniProtKB-UniRule"/>
</dbReference>
<dbReference type="CDD" id="cd00496">
    <property type="entry name" value="PheRS_alpha_core"/>
    <property type="match status" value="1"/>
</dbReference>
<dbReference type="FunFam" id="3.30.930.10:FF:000003">
    <property type="entry name" value="Phenylalanine--tRNA ligase alpha subunit"/>
    <property type="match status" value="1"/>
</dbReference>
<dbReference type="Gene3D" id="3.30.930.10">
    <property type="entry name" value="Bira Bifunctional Protein, Domain 2"/>
    <property type="match status" value="1"/>
</dbReference>
<dbReference type="HAMAP" id="MF_00281">
    <property type="entry name" value="Phe_tRNA_synth_alpha1"/>
    <property type="match status" value="1"/>
</dbReference>
<dbReference type="InterPro" id="IPR006195">
    <property type="entry name" value="aa-tRNA-synth_II"/>
</dbReference>
<dbReference type="InterPro" id="IPR045864">
    <property type="entry name" value="aa-tRNA-synth_II/BPL/LPL"/>
</dbReference>
<dbReference type="InterPro" id="IPR004529">
    <property type="entry name" value="Phe-tRNA-synth_IIc_asu"/>
</dbReference>
<dbReference type="InterPro" id="IPR004188">
    <property type="entry name" value="Phe-tRNA_ligase_II_N"/>
</dbReference>
<dbReference type="InterPro" id="IPR022911">
    <property type="entry name" value="Phe_tRNA_ligase_alpha1_bac"/>
</dbReference>
<dbReference type="InterPro" id="IPR002319">
    <property type="entry name" value="Phenylalanyl-tRNA_Synthase"/>
</dbReference>
<dbReference type="InterPro" id="IPR010978">
    <property type="entry name" value="tRNA-bd_arm"/>
</dbReference>
<dbReference type="NCBIfam" id="TIGR00468">
    <property type="entry name" value="pheS"/>
    <property type="match status" value="1"/>
</dbReference>
<dbReference type="PANTHER" id="PTHR11538:SF41">
    <property type="entry name" value="PHENYLALANINE--TRNA LIGASE, MITOCHONDRIAL"/>
    <property type="match status" value="1"/>
</dbReference>
<dbReference type="PANTHER" id="PTHR11538">
    <property type="entry name" value="PHENYLALANYL-TRNA SYNTHETASE"/>
    <property type="match status" value="1"/>
</dbReference>
<dbReference type="Pfam" id="PF02912">
    <property type="entry name" value="Phe_tRNA-synt_N"/>
    <property type="match status" value="1"/>
</dbReference>
<dbReference type="Pfam" id="PF01409">
    <property type="entry name" value="tRNA-synt_2d"/>
    <property type="match status" value="1"/>
</dbReference>
<dbReference type="SUPFAM" id="SSF55681">
    <property type="entry name" value="Class II aaRS and biotin synthetases"/>
    <property type="match status" value="1"/>
</dbReference>
<dbReference type="SUPFAM" id="SSF46589">
    <property type="entry name" value="tRNA-binding arm"/>
    <property type="match status" value="1"/>
</dbReference>
<dbReference type="PROSITE" id="PS50862">
    <property type="entry name" value="AA_TRNA_LIGASE_II"/>
    <property type="match status" value="1"/>
</dbReference>
<comment type="catalytic activity">
    <reaction evidence="1">
        <text>tRNA(Phe) + L-phenylalanine + ATP = L-phenylalanyl-tRNA(Phe) + AMP + diphosphate + H(+)</text>
        <dbReference type="Rhea" id="RHEA:19413"/>
        <dbReference type="Rhea" id="RHEA-COMP:9668"/>
        <dbReference type="Rhea" id="RHEA-COMP:9699"/>
        <dbReference type="ChEBI" id="CHEBI:15378"/>
        <dbReference type="ChEBI" id="CHEBI:30616"/>
        <dbReference type="ChEBI" id="CHEBI:33019"/>
        <dbReference type="ChEBI" id="CHEBI:58095"/>
        <dbReference type="ChEBI" id="CHEBI:78442"/>
        <dbReference type="ChEBI" id="CHEBI:78531"/>
        <dbReference type="ChEBI" id="CHEBI:456215"/>
        <dbReference type="EC" id="6.1.1.20"/>
    </reaction>
</comment>
<comment type="cofactor">
    <cofactor evidence="1">
        <name>Mg(2+)</name>
        <dbReference type="ChEBI" id="CHEBI:18420"/>
    </cofactor>
    <text evidence="1">Binds 2 magnesium ions per tetramer.</text>
</comment>
<comment type="subunit">
    <text evidence="1">Tetramer of two alpha and two beta subunits.</text>
</comment>
<comment type="subcellular location">
    <subcellularLocation>
        <location evidence="1">Cytoplasm</location>
    </subcellularLocation>
</comment>
<comment type="similarity">
    <text evidence="1">Belongs to the class-II aminoacyl-tRNA synthetase family. Phe-tRNA synthetase alpha subunit type 1 subfamily.</text>
</comment>
<organism>
    <name type="scientific">Dictyoglomus thermophilum (strain ATCC 35947 / DSM 3960 / H-6-12)</name>
    <dbReference type="NCBI Taxonomy" id="309799"/>
    <lineage>
        <taxon>Bacteria</taxon>
        <taxon>Pseudomonadati</taxon>
        <taxon>Dictyoglomota</taxon>
        <taxon>Dictyoglomia</taxon>
        <taxon>Dictyoglomales</taxon>
        <taxon>Dictyoglomaceae</taxon>
        <taxon>Dictyoglomus</taxon>
    </lineage>
</organism>
<sequence>MSEEYTEKFKEAKDKILKAQSLNELEEVKRIYLGKQGFLTQILRSIGKMPQEERAKWGRLANEWKEELETLYENKERELKYLTLQKKLEGEKIDITLPGRRKILGRIHPINQVIEEIVTVFKEMGFQVVYGPELETDYYNFTALNIPSDHPVRESHDSFYIDKEHLLRTQTSPVQIRVMEKKKPPLRVVAPGKCYRRDMPDATHSPMFHQIEGLAVDTDITFAELKGVLTIFAHRLFGKERKVYFIPSYFPFTEPSAEMYVECGVCKGVGCKACGYSGVLEILGCGMVHPEVFRIVGIDPEKYTGFAFGMGPDRIAMQIYGIDDIRLFYENDIRFLKQF</sequence>
<evidence type="ECO:0000255" key="1">
    <source>
        <dbReference type="HAMAP-Rule" id="MF_00281"/>
    </source>
</evidence>
<accession>B5YER5</accession>
<keyword id="KW-0030">Aminoacyl-tRNA synthetase</keyword>
<keyword id="KW-0067">ATP-binding</keyword>
<keyword id="KW-0963">Cytoplasm</keyword>
<keyword id="KW-0436">Ligase</keyword>
<keyword id="KW-0460">Magnesium</keyword>
<keyword id="KW-0479">Metal-binding</keyword>
<keyword id="KW-0547">Nucleotide-binding</keyword>
<keyword id="KW-0648">Protein biosynthesis</keyword>
<feature type="chain" id="PRO_1000114868" description="Phenylalanine--tRNA ligase alpha subunit">
    <location>
        <begin position="1"/>
        <end position="339"/>
    </location>
</feature>
<feature type="binding site" evidence="1">
    <location>
        <position position="254"/>
    </location>
    <ligand>
        <name>Mg(2+)</name>
        <dbReference type="ChEBI" id="CHEBI:18420"/>
        <note>shared with beta subunit</note>
    </ligand>
</feature>
<name>SYFA_DICT6</name>
<gene>
    <name evidence="1" type="primary">pheS</name>
    <name type="ordered locus">DICTH_1194</name>
</gene>
<protein>
    <recommendedName>
        <fullName evidence="1">Phenylalanine--tRNA ligase alpha subunit</fullName>
        <ecNumber evidence="1">6.1.1.20</ecNumber>
    </recommendedName>
    <alternativeName>
        <fullName evidence="1">Phenylalanyl-tRNA synthetase alpha subunit</fullName>
        <shortName evidence="1">PheRS</shortName>
    </alternativeName>
</protein>